<sequence>MRHIAVVYKRMRPEAARLAQDIKSWLAKRNVLVFCMENIDSAGVLSSHQRVDFPQDTDLVIVLGGDGTLLSVARLIESRKIPVIGVNLGGMGFLTGITIDNCYMELERILGGDYEIEERMRLRVLVRREHREIFSHRVLNDAVINKGALARIIDLVTVIDGRFLTHYRGDGLIFSTPTGSTAYNLAAGGPIVFPTAQAIIITPICSFTLTNRPIIFPSHVIIRIELGEPIKDVTLTCDGQVGCLLAPSDRIVITAAANPLRLIKTPTVDHFEILRNKLKWGQA</sequence>
<feature type="chain" id="PRO_1000079526" description="NAD kinase">
    <location>
        <begin position="1"/>
        <end position="283"/>
    </location>
</feature>
<feature type="active site" description="Proton acceptor" evidence="1">
    <location>
        <position position="66"/>
    </location>
</feature>
<feature type="binding site" evidence="1">
    <location>
        <begin position="66"/>
        <end position="67"/>
    </location>
    <ligand>
        <name>NAD(+)</name>
        <dbReference type="ChEBI" id="CHEBI:57540"/>
    </ligand>
</feature>
<feature type="binding site" evidence="1">
    <location>
        <begin position="140"/>
        <end position="141"/>
    </location>
    <ligand>
        <name>NAD(+)</name>
        <dbReference type="ChEBI" id="CHEBI:57540"/>
    </ligand>
</feature>
<feature type="binding site" evidence="1">
    <location>
        <position position="151"/>
    </location>
    <ligand>
        <name>NAD(+)</name>
        <dbReference type="ChEBI" id="CHEBI:57540"/>
    </ligand>
</feature>
<feature type="binding site" evidence="1">
    <location>
        <position position="168"/>
    </location>
    <ligand>
        <name>NAD(+)</name>
        <dbReference type="ChEBI" id="CHEBI:57540"/>
    </ligand>
</feature>
<feature type="binding site" evidence="1">
    <location>
        <position position="170"/>
    </location>
    <ligand>
        <name>NAD(+)</name>
        <dbReference type="ChEBI" id="CHEBI:57540"/>
    </ligand>
</feature>
<feature type="binding site" evidence="1">
    <location>
        <position position="240"/>
    </location>
    <ligand>
        <name>NAD(+)</name>
        <dbReference type="ChEBI" id="CHEBI:57540"/>
    </ligand>
</feature>
<reference key="1">
    <citation type="submission" date="2006-10" db="EMBL/GenBank/DDBJ databases">
        <title>Complete sequence of Syntrophobacter fumaroxidans MPOB.</title>
        <authorList>
            <consortium name="US DOE Joint Genome Institute"/>
            <person name="Copeland A."/>
            <person name="Lucas S."/>
            <person name="Lapidus A."/>
            <person name="Barry K."/>
            <person name="Detter J.C."/>
            <person name="Glavina del Rio T."/>
            <person name="Hammon N."/>
            <person name="Israni S."/>
            <person name="Pitluck S."/>
            <person name="Goltsman E.G."/>
            <person name="Martinez M."/>
            <person name="Schmutz J."/>
            <person name="Larimer F."/>
            <person name="Land M."/>
            <person name="Hauser L."/>
            <person name="Kyrpides N."/>
            <person name="Kim E."/>
            <person name="Boone D.R."/>
            <person name="Brockman F."/>
            <person name="Culley D."/>
            <person name="Ferry J."/>
            <person name="Gunsalus R."/>
            <person name="McInerney M.J."/>
            <person name="Morrison M."/>
            <person name="Plugge C."/>
            <person name="Rohlin L."/>
            <person name="Scholten J."/>
            <person name="Sieber J."/>
            <person name="Stams A.J.M."/>
            <person name="Worm P."/>
            <person name="Henstra A.M."/>
            <person name="Richardson P."/>
        </authorList>
    </citation>
    <scope>NUCLEOTIDE SEQUENCE [LARGE SCALE GENOMIC DNA]</scope>
    <source>
        <strain>DSM 10017 / MPOB</strain>
    </source>
</reference>
<name>NADK_SYNFM</name>
<accession>A0LG64</accession>
<evidence type="ECO:0000255" key="1">
    <source>
        <dbReference type="HAMAP-Rule" id="MF_00361"/>
    </source>
</evidence>
<comment type="function">
    <text evidence="1">Involved in the regulation of the intracellular balance of NAD and NADP, and is a key enzyme in the biosynthesis of NADP. Catalyzes specifically the phosphorylation on 2'-hydroxyl of the adenosine moiety of NAD to yield NADP.</text>
</comment>
<comment type="catalytic activity">
    <reaction evidence="1">
        <text>NAD(+) + ATP = ADP + NADP(+) + H(+)</text>
        <dbReference type="Rhea" id="RHEA:18629"/>
        <dbReference type="ChEBI" id="CHEBI:15378"/>
        <dbReference type="ChEBI" id="CHEBI:30616"/>
        <dbReference type="ChEBI" id="CHEBI:57540"/>
        <dbReference type="ChEBI" id="CHEBI:58349"/>
        <dbReference type="ChEBI" id="CHEBI:456216"/>
        <dbReference type="EC" id="2.7.1.23"/>
    </reaction>
</comment>
<comment type="cofactor">
    <cofactor evidence="1">
        <name>a divalent metal cation</name>
        <dbReference type="ChEBI" id="CHEBI:60240"/>
    </cofactor>
</comment>
<comment type="subcellular location">
    <subcellularLocation>
        <location evidence="1">Cytoplasm</location>
    </subcellularLocation>
</comment>
<comment type="similarity">
    <text evidence="1">Belongs to the NAD kinase family.</text>
</comment>
<protein>
    <recommendedName>
        <fullName evidence="1">NAD kinase</fullName>
        <ecNumber evidence="1">2.7.1.23</ecNumber>
    </recommendedName>
    <alternativeName>
        <fullName evidence="1">ATP-dependent NAD kinase</fullName>
    </alternativeName>
</protein>
<gene>
    <name evidence="1" type="primary">nadK</name>
    <name type="ordered locus">Sfum_0718</name>
</gene>
<proteinExistence type="inferred from homology"/>
<dbReference type="EC" id="2.7.1.23" evidence="1"/>
<dbReference type="EMBL" id="CP000478">
    <property type="protein sequence ID" value="ABK16416.1"/>
    <property type="molecule type" value="Genomic_DNA"/>
</dbReference>
<dbReference type="RefSeq" id="WP_011697589.1">
    <property type="nucleotide sequence ID" value="NC_008554.1"/>
</dbReference>
<dbReference type="SMR" id="A0LG64"/>
<dbReference type="FunCoup" id="A0LG64">
    <property type="interactions" value="542"/>
</dbReference>
<dbReference type="STRING" id="335543.Sfum_0718"/>
<dbReference type="KEGG" id="sfu:Sfum_0718"/>
<dbReference type="eggNOG" id="COG0061">
    <property type="taxonomic scope" value="Bacteria"/>
</dbReference>
<dbReference type="HOGENOM" id="CLU_008831_0_1_7"/>
<dbReference type="InParanoid" id="A0LG64"/>
<dbReference type="OrthoDB" id="9774737at2"/>
<dbReference type="Proteomes" id="UP000001784">
    <property type="component" value="Chromosome"/>
</dbReference>
<dbReference type="GO" id="GO:0005737">
    <property type="term" value="C:cytoplasm"/>
    <property type="evidence" value="ECO:0007669"/>
    <property type="project" value="UniProtKB-SubCell"/>
</dbReference>
<dbReference type="GO" id="GO:0005524">
    <property type="term" value="F:ATP binding"/>
    <property type="evidence" value="ECO:0007669"/>
    <property type="project" value="UniProtKB-KW"/>
</dbReference>
<dbReference type="GO" id="GO:0046872">
    <property type="term" value="F:metal ion binding"/>
    <property type="evidence" value="ECO:0007669"/>
    <property type="project" value="UniProtKB-UniRule"/>
</dbReference>
<dbReference type="GO" id="GO:0051287">
    <property type="term" value="F:NAD binding"/>
    <property type="evidence" value="ECO:0007669"/>
    <property type="project" value="UniProtKB-ARBA"/>
</dbReference>
<dbReference type="GO" id="GO:0003951">
    <property type="term" value="F:NAD+ kinase activity"/>
    <property type="evidence" value="ECO:0007669"/>
    <property type="project" value="UniProtKB-UniRule"/>
</dbReference>
<dbReference type="GO" id="GO:0019674">
    <property type="term" value="P:NAD metabolic process"/>
    <property type="evidence" value="ECO:0007669"/>
    <property type="project" value="InterPro"/>
</dbReference>
<dbReference type="GO" id="GO:0006741">
    <property type="term" value="P:NADP biosynthetic process"/>
    <property type="evidence" value="ECO:0007669"/>
    <property type="project" value="UniProtKB-UniRule"/>
</dbReference>
<dbReference type="Gene3D" id="3.40.50.10330">
    <property type="entry name" value="Probable inorganic polyphosphate/atp-NAD kinase, domain 1"/>
    <property type="match status" value="1"/>
</dbReference>
<dbReference type="Gene3D" id="2.60.200.30">
    <property type="entry name" value="Probable inorganic polyphosphate/atp-NAD kinase, domain 2"/>
    <property type="match status" value="1"/>
</dbReference>
<dbReference type="HAMAP" id="MF_00361">
    <property type="entry name" value="NAD_kinase"/>
    <property type="match status" value="1"/>
</dbReference>
<dbReference type="InterPro" id="IPR017438">
    <property type="entry name" value="ATP-NAD_kinase_N"/>
</dbReference>
<dbReference type="InterPro" id="IPR017437">
    <property type="entry name" value="ATP-NAD_kinase_PpnK-typ_C"/>
</dbReference>
<dbReference type="InterPro" id="IPR016064">
    <property type="entry name" value="NAD/diacylglycerol_kinase_sf"/>
</dbReference>
<dbReference type="InterPro" id="IPR002504">
    <property type="entry name" value="NADK"/>
</dbReference>
<dbReference type="PANTHER" id="PTHR20275">
    <property type="entry name" value="NAD KINASE"/>
    <property type="match status" value="1"/>
</dbReference>
<dbReference type="PANTHER" id="PTHR20275:SF0">
    <property type="entry name" value="NAD KINASE"/>
    <property type="match status" value="1"/>
</dbReference>
<dbReference type="Pfam" id="PF01513">
    <property type="entry name" value="NAD_kinase"/>
    <property type="match status" value="1"/>
</dbReference>
<dbReference type="Pfam" id="PF20143">
    <property type="entry name" value="NAD_kinase_C"/>
    <property type="match status" value="1"/>
</dbReference>
<dbReference type="SUPFAM" id="SSF111331">
    <property type="entry name" value="NAD kinase/diacylglycerol kinase-like"/>
    <property type="match status" value="1"/>
</dbReference>
<organism>
    <name type="scientific">Syntrophobacter fumaroxidans (strain DSM 10017 / MPOB)</name>
    <dbReference type="NCBI Taxonomy" id="335543"/>
    <lineage>
        <taxon>Bacteria</taxon>
        <taxon>Pseudomonadati</taxon>
        <taxon>Thermodesulfobacteriota</taxon>
        <taxon>Syntrophobacteria</taxon>
        <taxon>Syntrophobacterales</taxon>
        <taxon>Syntrophobacteraceae</taxon>
        <taxon>Syntrophobacter</taxon>
    </lineage>
</organism>
<keyword id="KW-0067">ATP-binding</keyword>
<keyword id="KW-0963">Cytoplasm</keyword>
<keyword id="KW-0418">Kinase</keyword>
<keyword id="KW-0520">NAD</keyword>
<keyword id="KW-0521">NADP</keyword>
<keyword id="KW-0547">Nucleotide-binding</keyword>
<keyword id="KW-1185">Reference proteome</keyword>
<keyword id="KW-0808">Transferase</keyword>